<comment type="function">
    <text evidence="1">Core subunit of the mitochondrial membrane respiratory chain NADH dehydrogenase (Complex I) that is believed to belong to the minimal assembly required for catalysis. Complex I functions in the transfer of electrons from NADH to the respiratory chain. The immediate electron acceptor for the enzyme is believed to be ubiquinone (By similarity). May donate electrons to ubiquinone.</text>
</comment>
<comment type="catalytic activity">
    <reaction>
        <text>a ubiquinone + NADH + 5 H(+)(in) = a ubiquinol + NAD(+) + 4 H(+)(out)</text>
        <dbReference type="Rhea" id="RHEA:29091"/>
        <dbReference type="Rhea" id="RHEA-COMP:9565"/>
        <dbReference type="Rhea" id="RHEA-COMP:9566"/>
        <dbReference type="ChEBI" id="CHEBI:15378"/>
        <dbReference type="ChEBI" id="CHEBI:16389"/>
        <dbReference type="ChEBI" id="CHEBI:17976"/>
        <dbReference type="ChEBI" id="CHEBI:57540"/>
        <dbReference type="ChEBI" id="CHEBI:57945"/>
        <dbReference type="EC" id="7.1.1.2"/>
    </reaction>
</comment>
<comment type="cofactor">
    <cofactor evidence="1">
        <name>[4Fe-4S] cluster</name>
        <dbReference type="ChEBI" id="CHEBI:49883"/>
    </cofactor>
    <text evidence="1">Binds 2 [4Fe-4S] clusters per subunit.</text>
</comment>
<comment type="subunit">
    <text evidence="1">Complex I is composed of about 45 different subunits. This is a component of the iron-sulfur (IP) fragment of the enzyme (By similarity).</text>
</comment>
<comment type="subcellular location">
    <subcellularLocation>
        <location evidence="2">Mitochondrion inner membrane</location>
        <topology evidence="3">Peripheral membrane protein</topology>
        <orientation evidence="3">Matrix side</orientation>
    </subcellularLocation>
</comment>
<comment type="tissue specificity">
    <text>Lowest expression found in storage tissues of tubers. Higher expression in older leaves than younger ones. Highest expression found in flowers.</text>
</comment>
<comment type="polymorphism">
    <text evidence="4">There are two alleles; TYKY1 (shown here) and TYKY2.</text>
</comment>
<comment type="similarity">
    <text evidence="3">Belongs to the complex I 23 kDa subunit family.</text>
</comment>
<comment type="caution">
    <text evidence="4">Was originally reported that TYKY1 and TYKY2 were two different genes.</text>
</comment>
<accession>P80269</accession>
<accession>Q43849</accession>
<accession>Q43850</accession>
<reference key="1">
    <citation type="journal article" date="1997" name="Mol. Gen. Genet.">
        <title>The 28.5-kDa iron-sulfur protein of mitochondrial complex I is encoded in the nucleus in plants.</title>
        <authorList>
            <person name="Schmidt-Bleek K."/>
            <person name="Heiser V."/>
            <person name="Thieck O."/>
            <person name="Brennicke A."/>
            <person name="Grohmann L."/>
        </authorList>
    </citation>
    <scope>NUCLEOTIDE SEQUENCE [MRNA] (ALLELES TYKY1 AND TYKY2)</scope>
    <source>
        <strain>cv. Desiree</strain>
        <tissue>Leaf</tissue>
    </source>
</reference>
<reference key="2">
    <citation type="journal article" date="2011" name="Nature">
        <title>Genome sequence and analysis of the tuber crop potato.</title>
        <authorList>
            <consortium name="The Potato Genome Sequencing Consortium"/>
        </authorList>
    </citation>
    <scope>NUCLEOTIDE SEQUENCE [LARGE SCALE GENOMIC DNA]</scope>
    <source>
        <strain>cv. DM1-3 516 R44</strain>
    </source>
</reference>
<reference key="3">
    <citation type="journal article" date="1994" name="J. Biol. Chem.">
        <title>Purification of the NADH:ubiquinone oxidoreductase (complex I) of the respiratory chain from the inner mitochondrial membrane of Solanum tuberosum.</title>
        <authorList>
            <person name="Herz U."/>
            <person name="Schroeder W."/>
            <person name="Liddell A."/>
            <person name="Leaver C.J."/>
            <person name="Brennicke A."/>
            <person name="Grohmann L."/>
        </authorList>
    </citation>
    <scope>PROTEIN SEQUENCE OF 42-65</scope>
    <scope>SUBCELLULAR LOCATION</scope>
    <source>
        <strain>cv. Bintje</strain>
        <tissue>Tuber</tissue>
    </source>
</reference>
<keyword id="KW-0004">4Fe-4S</keyword>
<keyword id="KW-0903">Direct protein sequencing</keyword>
<keyword id="KW-0249">Electron transport</keyword>
<keyword id="KW-0408">Iron</keyword>
<keyword id="KW-0411">Iron-sulfur</keyword>
<keyword id="KW-0472">Membrane</keyword>
<keyword id="KW-0479">Metal-binding</keyword>
<keyword id="KW-0496">Mitochondrion</keyword>
<keyword id="KW-0999">Mitochondrion inner membrane</keyword>
<keyword id="KW-0520">NAD</keyword>
<keyword id="KW-0560">Oxidoreductase</keyword>
<keyword id="KW-1185">Reference proteome</keyword>
<keyword id="KW-0677">Repeat</keyword>
<keyword id="KW-0679">Respiratory chain</keyword>
<keyword id="KW-0809">Transit peptide</keyword>
<keyword id="KW-1278">Translocase</keyword>
<keyword id="KW-0813">Transport</keyword>
<keyword id="KW-0830">Ubiquinone</keyword>
<name>NDUS8_SOLTU</name>
<sequence length="229" mass="26378">MAAILARKSLSALRSRQLVLAGHTIEGTNGYNRTLLGTRSFATKHSFSTDKDDEEREQLAKELSKDWNSVFERSINTLFLTEMVRGLMLTLKYFFEKKVTINYPFEKGPLSPRFRGEHALRRYATGEERCIACKLCEAICPAQAITIEAEEREDGSRRTTRYDIDMTKCIYCGFCQEACPVDAIVEGPNFEFATETHEELLYDKEKLLENGDRWETEIAENLRSESLYR</sequence>
<dbReference type="EC" id="7.1.1.2"/>
<dbReference type="EMBL" id="X84319">
    <property type="protein sequence ID" value="CAA59062.1"/>
    <property type="molecule type" value="mRNA"/>
</dbReference>
<dbReference type="EMBL" id="X84320">
    <property type="protein sequence ID" value="CAA59063.1"/>
    <property type="molecule type" value="mRNA"/>
</dbReference>
<dbReference type="PIR" id="S52385">
    <property type="entry name" value="S52385"/>
</dbReference>
<dbReference type="PIR" id="S52386">
    <property type="entry name" value="S52386"/>
</dbReference>
<dbReference type="RefSeq" id="NP_001275214.1">
    <property type="nucleotide sequence ID" value="NM_001288285.1"/>
</dbReference>
<dbReference type="SMR" id="P80269"/>
<dbReference type="FunCoup" id="P80269">
    <property type="interactions" value="3134"/>
</dbReference>
<dbReference type="STRING" id="4113.P80269"/>
<dbReference type="PaxDb" id="4113-PGSC0003DMT400084285"/>
<dbReference type="EnsemblPlants" id="PGSC0003DMT400084285">
    <property type="protein sequence ID" value="PGSC0003DMT400084285"/>
    <property type="gene ID" value="PGSC0003DMG400033912"/>
</dbReference>
<dbReference type="EnsemblPlants" id="RHC10H1G1669.2.1">
    <property type="protein sequence ID" value="RHC10H1G1669.2.1"/>
    <property type="gene ID" value="RHC10H1G1669.2"/>
</dbReference>
<dbReference type="GeneID" id="102589342"/>
<dbReference type="Gramene" id="PGSC0003DMT400084285">
    <property type="protein sequence ID" value="PGSC0003DMT400084285"/>
    <property type="gene ID" value="PGSC0003DMG400033912"/>
</dbReference>
<dbReference type="Gramene" id="RHC10H1G1669.2.1">
    <property type="protein sequence ID" value="RHC10H1G1669.2.1"/>
    <property type="gene ID" value="RHC10H1G1669.2"/>
</dbReference>
<dbReference type="KEGG" id="sot:102589342"/>
<dbReference type="eggNOG" id="KOG3256">
    <property type="taxonomic scope" value="Eukaryota"/>
</dbReference>
<dbReference type="HOGENOM" id="CLU_067218_5_0_1"/>
<dbReference type="InParanoid" id="P80269"/>
<dbReference type="OMA" id="QFFRAPY"/>
<dbReference type="OrthoDB" id="204405at2759"/>
<dbReference type="Proteomes" id="UP000011115">
    <property type="component" value="Unassembled WGS sequence"/>
</dbReference>
<dbReference type="GO" id="GO:0005743">
    <property type="term" value="C:mitochondrial inner membrane"/>
    <property type="evidence" value="ECO:0007669"/>
    <property type="project" value="UniProtKB-SubCell"/>
</dbReference>
<dbReference type="GO" id="GO:0045271">
    <property type="term" value="C:respiratory chain complex I"/>
    <property type="evidence" value="ECO:0000318"/>
    <property type="project" value="GO_Central"/>
</dbReference>
<dbReference type="GO" id="GO:0051539">
    <property type="term" value="F:4 iron, 4 sulfur cluster binding"/>
    <property type="evidence" value="ECO:0007669"/>
    <property type="project" value="UniProtKB-KW"/>
</dbReference>
<dbReference type="GO" id="GO:0046872">
    <property type="term" value="F:metal ion binding"/>
    <property type="evidence" value="ECO:0007669"/>
    <property type="project" value="UniProtKB-KW"/>
</dbReference>
<dbReference type="GO" id="GO:0008137">
    <property type="term" value="F:NADH dehydrogenase (ubiquinone) activity"/>
    <property type="evidence" value="ECO:0007669"/>
    <property type="project" value="UniProtKB-EC"/>
</dbReference>
<dbReference type="GO" id="GO:0006120">
    <property type="term" value="P:mitochondrial electron transport, NADH to ubiquinone"/>
    <property type="evidence" value="ECO:0000318"/>
    <property type="project" value="GO_Central"/>
</dbReference>
<dbReference type="GO" id="GO:0032981">
    <property type="term" value="P:mitochondrial respiratory chain complex I assembly"/>
    <property type="evidence" value="ECO:0000318"/>
    <property type="project" value="GO_Central"/>
</dbReference>
<dbReference type="FunFam" id="3.30.70.3270:FF:000001">
    <property type="entry name" value="NADH-quinone oxidoreductase subunit I 1"/>
    <property type="match status" value="1"/>
</dbReference>
<dbReference type="Gene3D" id="3.30.70.3270">
    <property type="match status" value="1"/>
</dbReference>
<dbReference type="HAMAP" id="MF_01351">
    <property type="entry name" value="NDH1_NuoI"/>
    <property type="match status" value="1"/>
</dbReference>
<dbReference type="InterPro" id="IPR017896">
    <property type="entry name" value="4Fe4S_Fe-S-bd"/>
</dbReference>
<dbReference type="InterPro" id="IPR017900">
    <property type="entry name" value="4Fe4S_Fe_S_CS"/>
</dbReference>
<dbReference type="InterPro" id="IPR010226">
    <property type="entry name" value="NADH_quinone_OxRdtase_chainI"/>
</dbReference>
<dbReference type="NCBIfam" id="TIGR01971">
    <property type="entry name" value="NuoI"/>
    <property type="match status" value="1"/>
</dbReference>
<dbReference type="NCBIfam" id="NF004538">
    <property type="entry name" value="PRK05888.1-4"/>
    <property type="match status" value="1"/>
</dbReference>
<dbReference type="NCBIfam" id="NF004539">
    <property type="entry name" value="PRK05888.1-5"/>
    <property type="match status" value="1"/>
</dbReference>
<dbReference type="PANTHER" id="PTHR10849:SF20">
    <property type="entry name" value="NADH DEHYDROGENASE [UBIQUINONE] IRON-SULFUR PROTEIN 8, MITOCHONDRIAL"/>
    <property type="match status" value="1"/>
</dbReference>
<dbReference type="PANTHER" id="PTHR10849">
    <property type="entry name" value="NADH DEHYDROGENASE UBIQUINONE IRON-SULFUR PROTEIN 8, MITOCHONDRIAL"/>
    <property type="match status" value="1"/>
</dbReference>
<dbReference type="Pfam" id="PF12838">
    <property type="entry name" value="Fer4_7"/>
    <property type="match status" value="1"/>
</dbReference>
<dbReference type="SUPFAM" id="SSF54862">
    <property type="entry name" value="4Fe-4S ferredoxins"/>
    <property type="match status" value="1"/>
</dbReference>
<dbReference type="PROSITE" id="PS00198">
    <property type="entry name" value="4FE4S_FER_1"/>
    <property type="match status" value="2"/>
</dbReference>
<dbReference type="PROSITE" id="PS51379">
    <property type="entry name" value="4FE4S_FER_2"/>
    <property type="match status" value="2"/>
</dbReference>
<organism>
    <name type="scientific">Solanum tuberosum</name>
    <name type="common">Potato</name>
    <dbReference type="NCBI Taxonomy" id="4113"/>
    <lineage>
        <taxon>Eukaryota</taxon>
        <taxon>Viridiplantae</taxon>
        <taxon>Streptophyta</taxon>
        <taxon>Embryophyta</taxon>
        <taxon>Tracheophyta</taxon>
        <taxon>Spermatophyta</taxon>
        <taxon>Magnoliopsida</taxon>
        <taxon>eudicotyledons</taxon>
        <taxon>Gunneridae</taxon>
        <taxon>Pentapetalae</taxon>
        <taxon>asterids</taxon>
        <taxon>lamiids</taxon>
        <taxon>Solanales</taxon>
        <taxon>Solanaceae</taxon>
        <taxon>Solanoideae</taxon>
        <taxon>Solaneae</taxon>
        <taxon>Solanum</taxon>
    </lineage>
</organism>
<proteinExistence type="evidence at protein level"/>
<protein>
    <recommendedName>
        <fullName>NADH dehydrogenase [ubiquinone] iron-sulfur protein 8, mitochondrial</fullName>
        <ecNumber>7.1.1.2</ecNumber>
    </recommendedName>
    <alternativeName>
        <fullName>Complex I-28.5kD</fullName>
        <shortName>CI-28.5kD</shortName>
    </alternativeName>
    <alternativeName>
        <fullName>NADH-ubiquinone oxidoreductase 28.5 kDa subunit</fullName>
    </alternativeName>
</protein>
<feature type="transit peptide" description="Mitochondrion" evidence="2">
    <location>
        <begin position="1"/>
        <end position="41"/>
    </location>
</feature>
<feature type="chain" id="PRO_0000020017" description="NADH dehydrogenase [ubiquinone] iron-sulfur protein 8, mitochondrial">
    <location>
        <begin position="42"/>
        <end position="229"/>
    </location>
</feature>
<feature type="domain" description="4Fe-4S ferredoxin-type 1">
    <location>
        <begin position="121"/>
        <end position="150"/>
    </location>
</feature>
<feature type="domain" description="4Fe-4S ferredoxin-type 2">
    <location>
        <begin position="160"/>
        <end position="189"/>
    </location>
</feature>
<feature type="binding site" evidence="1">
    <location>
        <position position="130"/>
    </location>
    <ligand>
        <name>[4Fe-4S] cluster</name>
        <dbReference type="ChEBI" id="CHEBI:49883"/>
        <label>1</label>
    </ligand>
</feature>
<feature type="binding site" evidence="1">
    <location>
        <position position="133"/>
    </location>
    <ligand>
        <name>[4Fe-4S] cluster</name>
        <dbReference type="ChEBI" id="CHEBI:49883"/>
        <label>1</label>
    </ligand>
</feature>
<feature type="binding site" evidence="1">
    <location>
        <position position="136"/>
    </location>
    <ligand>
        <name>[4Fe-4S] cluster</name>
        <dbReference type="ChEBI" id="CHEBI:49883"/>
        <label>1</label>
    </ligand>
</feature>
<feature type="binding site" evidence="1">
    <location>
        <position position="140"/>
    </location>
    <ligand>
        <name>[4Fe-4S] cluster</name>
        <dbReference type="ChEBI" id="CHEBI:49883"/>
        <label>2</label>
    </ligand>
</feature>
<feature type="binding site" evidence="1">
    <location>
        <position position="169"/>
    </location>
    <ligand>
        <name>[4Fe-4S] cluster</name>
        <dbReference type="ChEBI" id="CHEBI:49883"/>
        <label>2</label>
    </ligand>
</feature>
<feature type="binding site" evidence="1">
    <location>
        <position position="172"/>
    </location>
    <ligand>
        <name>[4Fe-4S] cluster</name>
        <dbReference type="ChEBI" id="CHEBI:49883"/>
        <label>2</label>
    </ligand>
</feature>
<feature type="binding site" evidence="1">
    <location>
        <position position="175"/>
    </location>
    <ligand>
        <name>[4Fe-4S] cluster</name>
        <dbReference type="ChEBI" id="CHEBI:49883"/>
        <label>2</label>
    </ligand>
</feature>
<feature type="binding site" evidence="1">
    <location>
        <position position="179"/>
    </location>
    <ligand>
        <name>[4Fe-4S] cluster</name>
        <dbReference type="ChEBI" id="CHEBI:49883"/>
        <label>1</label>
    </ligand>
</feature>
<feature type="sequence variant" description="In allele TYKY2.">
    <original>HTIE</original>
    <variation>QAWQ</variation>
    <location>
        <begin position="23"/>
        <end position="26"/>
    </location>
</feature>
<feature type="sequence variant" description="In allele TYKY2.">
    <original>GYNR</original>
    <variation>TPNG</variation>
    <location>
        <begin position="30"/>
        <end position="33"/>
    </location>
</feature>
<feature type="sequence variant" description="In strain: cv. Bintje.">
    <original>E</original>
    <variation>R</variation>
    <location>
        <position position="57"/>
    </location>
</feature>
<feature type="sequence variant" description="In strain: cv. Bintje.">
    <original>E</original>
    <variation>K</variation>
    <location>
        <position position="62"/>
    </location>
</feature>
<feature type="sequence variant" description="In strain: cv. Bintje.">
    <original>K</original>
    <variation>T</variation>
    <location>
        <position position="65"/>
    </location>
</feature>
<feature type="sequence variant" description="In allele TYKY2.">
    <original>R</original>
    <variation>H</variation>
    <location>
        <position position="121"/>
    </location>
</feature>
<feature type="sequence variant" description="In allele TYKY2.">
    <original>T</original>
    <variation>I</variation>
    <location>
        <position position="216"/>
    </location>
</feature>
<evidence type="ECO:0000250" key="1"/>
<evidence type="ECO:0000269" key="2">
    <source>
    </source>
</evidence>
<evidence type="ECO:0000305" key="3"/>
<evidence type="ECO:0000305" key="4">
    <source>
    </source>
</evidence>